<accession>B4TQ30</accession>
<evidence type="ECO:0000255" key="1">
    <source>
        <dbReference type="HAMAP-Rule" id="MF_00691"/>
    </source>
</evidence>
<sequence length="244" mass="26059">MNIDLNADLGEGCASDSELLTLVSSANIACGFHAGDAQTMLTCVREALKNGVAIGAHPSFPDRDNFGRTAMALPPETVYAQTLYQIGALGAIVQAQGGVMRHVKPHGMLYNQAAKDPHLAQAIAKAVHDYDPSLILVGLAGSELIRAGERYRLVTRQEVFADRGYQADGSLVPRTQPGALIHDEEQALAQTLDMVQAGRVKSVTGVWTTVTAQTVCIHGDGEYALAFARRLRAAFNARNIHVIA</sequence>
<keyword id="KW-0067">ATP-binding</keyword>
<keyword id="KW-0378">Hydrolase</keyword>
<keyword id="KW-0547">Nucleotide-binding</keyword>
<reference key="1">
    <citation type="journal article" date="2011" name="J. Bacteriol.">
        <title>Comparative genomics of 28 Salmonella enterica isolates: evidence for CRISPR-mediated adaptive sublineage evolution.</title>
        <authorList>
            <person name="Fricke W.F."/>
            <person name="Mammel M.K."/>
            <person name="McDermott P.F."/>
            <person name="Tartera C."/>
            <person name="White D.G."/>
            <person name="Leclerc J.E."/>
            <person name="Ravel J."/>
            <person name="Cebula T.A."/>
        </authorList>
    </citation>
    <scope>NUCLEOTIDE SEQUENCE [LARGE SCALE GENOMIC DNA]</scope>
    <source>
        <strain>CVM19633</strain>
    </source>
</reference>
<organism>
    <name type="scientific">Salmonella schwarzengrund (strain CVM19633)</name>
    <dbReference type="NCBI Taxonomy" id="439843"/>
    <lineage>
        <taxon>Bacteria</taxon>
        <taxon>Pseudomonadati</taxon>
        <taxon>Pseudomonadota</taxon>
        <taxon>Gammaproteobacteria</taxon>
        <taxon>Enterobacterales</taxon>
        <taxon>Enterobacteriaceae</taxon>
        <taxon>Salmonella</taxon>
    </lineage>
</organism>
<comment type="function">
    <text evidence="1">Catalyzes the cleavage of 5-oxoproline to form L-glutamate coupled to the hydrolysis of ATP to ADP and inorganic phosphate.</text>
</comment>
<comment type="catalytic activity">
    <reaction evidence="1">
        <text>5-oxo-L-proline + ATP + 2 H2O = L-glutamate + ADP + phosphate + H(+)</text>
        <dbReference type="Rhea" id="RHEA:10348"/>
        <dbReference type="ChEBI" id="CHEBI:15377"/>
        <dbReference type="ChEBI" id="CHEBI:15378"/>
        <dbReference type="ChEBI" id="CHEBI:29985"/>
        <dbReference type="ChEBI" id="CHEBI:30616"/>
        <dbReference type="ChEBI" id="CHEBI:43474"/>
        <dbReference type="ChEBI" id="CHEBI:58402"/>
        <dbReference type="ChEBI" id="CHEBI:456216"/>
        <dbReference type="EC" id="3.5.2.9"/>
    </reaction>
</comment>
<comment type="subunit">
    <text evidence="1">Forms a complex composed of PxpA, PxpB and PxpC.</text>
</comment>
<comment type="similarity">
    <text evidence="1">Belongs to the LamB/PxpA family.</text>
</comment>
<name>PXPA_SALSV</name>
<dbReference type="EC" id="3.5.2.9" evidence="1"/>
<dbReference type="EMBL" id="CP001127">
    <property type="protein sequence ID" value="ACF89689.1"/>
    <property type="molecule type" value="Genomic_DNA"/>
</dbReference>
<dbReference type="RefSeq" id="WP_001017904.1">
    <property type="nucleotide sequence ID" value="NC_011094.1"/>
</dbReference>
<dbReference type="SMR" id="B4TQ30"/>
<dbReference type="KEGG" id="sew:SeSA_A0871"/>
<dbReference type="HOGENOM" id="CLU_069535_0_0_6"/>
<dbReference type="Proteomes" id="UP000001865">
    <property type="component" value="Chromosome"/>
</dbReference>
<dbReference type="GO" id="GO:0017168">
    <property type="term" value="F:5-oxoprolinase (ATP-hydrolyzing) activity"/>
    <property type="evidence" value="ECO:0007669"/>
    <property type="project" value="UniProtKB-UniRule"/>
</dbReference>
<dbReference type="GO" id="GO:0005524">
    <property type="term" value="F:ATP binding"/>
    <property type="evidence" value="ECO:0007669"/>
    <property type="project" value="UniProtKB-UniRule"/>
</dbReference>
<dbReference type="GO" id="GO:0005975">
    <property type="term" value="P:carbohydrate metabolic process"/>
    <property type="evidence" value="ECO:0007669"/>
    <property type="project" value="InterPro"/>
</dbReference>
<dbReference type="CDD" id="cd10800">
    <property type="entry name" value="LamB_YcsF_YbgL_like"/>
    <property type="match status" value="1"/>
</dbReference>
<dbReference type="Gene3D" id="3.20.20.370">
    <property type="entry name" value="Glycoside hydrolase/deacetylase"/>
    <property type="match status" value="1"/>
</dbReference>
<dbReference type="HAMAP" id="MF_00691">
    <property type="entry name" value="PxpA"/>
    <property type="match status" value="1"/>
</dbReference>
<dbReference type="InterPro" id="IPR011330">
    <property type="entry name" value="Glyco_hydro/deAcase_b/a-brl"/>
</dbReference>
<dbReference type="InterPro" id="IPR005501">
    <property type="entry name" value="LamB/YcsF/PxpA-like"/>
</dbReference>
<dbReference type="NCBIfam" id="NF003812">
    <property type="entry name" value="PRK05406.1-1"/>
    <property type="match status" value="1"/>
</dbReference>
<dbReference type="NCBIfam" id="NF003814">
    <property type="entry name" value="PRK05406.1-3"/>
    <property type="match status" value="1"/>
</dbReference>
<dbReference type="NCBIfam" id="NF003815">
    <property type="entry name" value="PRK05406.1-4"/>
    <property type="match status" value="1"/>
</dbReference>
<dbReference type="NCBIfam" id="NF003816">
    <property type="entry name" value="PRK05406.1-5"/>
    <property type="match status" value="1"/>
</dbReference>
<dbReference type="PANTHER" id="PTHR30292:SF0">
    <property type="entry name" value="5-OXOPROLINASE SUBUNIT A"/>
    <property type="match status" value="1"/>
</dbReference>
<dbReference type="PANTHER" id="PTHR30292">
    <property type="entry name" value="UNCHARACTERIZED PROTEIN YBGL-RELATED"/>
    <property type="match status" value="1"/>
</dbReference>
<dbReference type="Pfam" id="PF03746">
    <property type="entry name" value="LamB_YcsF"/>
    <property type="match status" value="1"/>
</dbReference>
<dbReference type="SUPFAM" id="SSF88713">
    <property type="entry name" value="Glycoside hydrolase/deacetylase"/>
    <property type="match status" value="1"/>
</dbReference>
<feature type="chain" id="PRO_1000132075" description="5-oxoprolinase subunit A">
    <location>
        <begin position="1"/>
        <end position="244"/>
    </location>
</feature>
<gene>
    <name evidence="1" type="primary">pxpA</name>
    <name type="ordered locus">SeSA_A0871</name>
</gene>
<protein>
    <recommendedName>
        <fullName evidence="1">5-oxoprolinase subunit A</fullName>
        <shortName evidence="1">5-OPase subunit A</shortName>
        <ecNumber evidence="1">3.5.2.9</ecNumber>
    </recommendedName>
    <alternativeName>
        <fullName evidence="1">5-oxoprolinase (ATP-hydrolyzing) subunit A</fullName>
    </alternativeName>
</protein>
<proteinExistence type="inferred from homology"/>